<evidence type="ECO:0000255" key="1">
    <source>
        <dbReference type="HAMAP-Rule" id="MF_00385"/>
    </source>
</evidence>
<evidence type="ECO:0000305" key="2"/>
<accession>Q4L5U0</accession>
<comment type="similarity">
    <text evidence="1">Belongs to the bacterial ribosomal protein bS16 family.</text>
</comment>
<protein>
    <recommendedName>
        <fullName evidence="1">Small ribosomal subunit protein bS16</fullName>
    </recommendedName>
    <alternativeName>
        <fullName evidence="2">30S ribosomal protein S16</fullName>
    </alternativeName>
</protein>
<name>RS16_STAHJ</name>
<sequence length="91" mass="10268">MAVKIRLTRLGSKRNPFYRIVVADARSPRDGRIIEQIGTYNPASVNAPEVKIDEELALKWLKDGAKPTDTVHNILSKQGILKTFDEQKHAK</sequence>
<gene>
    <name evidence="1" type="primary">rpsP</name>
    <name type="ordered locus">SH1676</name>
</gene>
<proteinExistence type="inferred from homology"/>
<dbReference type="EMBL" id="AP006716">
    <property type="protein sequence ID" value="BAE04985.1"/>
    <property type="molecule type" value="Genomic_DNA"/>
</dbReference>
<dbReference type="RefSeq" id="WP_011275962.1">
    <property type="nucleotide sequence ID" value="NC_007168.1"/>
</dbReference>
<dbReference type="SMR" id="Q4L5U0"/>
<dbReference type="GeneID" id="93781054"/>
<dbReference type="KEGG" id="sha:SH1676"/>
<dbReference type="eggNOG" id="COG0228">
    <property type="taxonomic scope" value="Bacteria"/>
</dbReference>
<dbReference type="HOGENOM" id="CLU_100590_5_0_9"/>
<dbReference type="OrthoDB" id="9807878at2"/>
<dbReference type="Proteomes" id="UP000000543">
    <property type="component" value="Chromosome"/>
</dbReference>
<dbReference type="GO" id="GO:0005737">
    <property type="term" value="C:cytoplasm"/>
    <property type="evidence" value="ECO:0007669"/>
    <property type="project" value="UniProtKB-ARBA"/>
</dbReference>
<dbReference type="GO" id="GO:0015935">
    <property type="term" value="C:small ribosomal subunit"/>
    <property type="evidence" value="ECO:0007669"/>
    <property type="project" value="TreeGrafter"/>
</dbReference>
<dbReference type="GO" id="GO:0003735">
    <property type="term" value="F:structural constituent of ribosome"/>
    <property type="evidence" value="ECO:0007669"/>
    <property type="project" value="InterPro"/>
</dbReference>
<dbReference type="GO" id="GO:0006412">
    <property type="term" value="P:translation"/>
    <property type="evidence" value="ECO:0007669"/>
    <property type="project" value="UniProtKB-UniRule"/>
</dbReference>
<dbReference type="FunFam" id="3.30.1320.10:FF:000002">
    <property type="entry name" value="30S ribosomal protein S16"/>
    <property type="match status" value="1"/>
</dbReference>
<dbReference type="Gene3D" id="3.30.1320.10">
    <property type="match status" value="1"/>
</dbReference>
<dbReference type="HAMAP" id="MF_00385">
    <property type="entry name" value="Ribosomal_bS16"/>
    <property type="match status" value="1"/>
</dbReference>
<dbReference type="InterPro" id="IPR000307">
    <property type="entry name" value="Ribosomal_bS16"/>
</dbReference>
<dbReference type="InterPro" id="IPR023803">
    <property type="entry name" value="Ribosomal_bS16_dom_sf"/>
</dbReference>
<dbReference type="NCBIfam" id="TIGR00002">
    <property type="entry name" value="S16"/>
    <property type="match status" value="1"/>
</dbReference>
<dbReference type="PANTHER" id="PTHR12919">
    <property type="entry name" value="30S RIBOSOMAL PROTEIN S16"/>
    <property type="match status" value="1"/>
</dbReference>
<dbReference type="PANTHER" id="PTHR12919:SF20">
    <property type="entry name" value="SMALL RIBOSOMAL SUBUNIT PROTEIN BS16M"/>
    <property type="match status" value="1"/>
</dbReference>
<dbReference type="Pfam" id="PF00886">
    <property type="entry name" value="Ribosomal_S16"/>
    <property type="match status" value="1"/>
</dbReference>
<dbReference type="SUPFAM" id="SSF54565">
    <property type="entry name" value="Ribosomal protein S16"/>
    <property type="match status" value="1"/>
</dbReference>
<feature type="chain" id="PRO_0000167249" description="Small ribosomal subunit protein bS16">
    <location>
        <begin position="1"/>
        <end position="91"/>
    </location>
</feature>
<keyword id="KW-0687">Ribonucleoprotein</keyword>
<keyword id="KW-0689">Ribosomal protein</keyword>
<reference key="1">
    <citation type="journal article" date="2005" name="J. Bacteriol.">
        <title>Whole-genome sequencing of Staphylococcus haemolyticus uncovers the extreme plasticity of its genome and the evolution of human-colonizing staphylococcal species.</title>
        <authorList>
            <person name="Takeuchi F."/>
            <person name="Watanabe S."/>
            <person name="Baba T."/>
            <person name="Yuzawa H."/>
            <person name="Ito T."/>
            <person name="Morimoto Y."/>
            <person name="Kuroda M."/>
            <person name="Cui L."/>
            <person name="Takahashi M."/>
            <person name="Ankai A."/>
            <person name="Baba S."/>
            <person name="Fukui S."/>
            <person name="Lee J.C."/>
            <person name="Hiramatsu K."/>
        </authorList>
    </citation>
    <scope>NUCLEOTIDE SEQUENCE [LARGE SCALE GENOMIC DNA]</scope>
    <source>
        <strain>JCSC1435</strain>
    </source>
</reference>
<organism>
    <name type="scientific">Staphylococcus haemolyticus (strain JCSC1435)</name>
    <dbReference type="NCBI Taxonomy" id="279808"/>
    <lineage>
        <taxon>Bacteria</taxon>
        <taxon>Bacillati</taxon>
        <taxon>Bacillota</taxon>
        <taxon>Bacilli</taxon>
        <taxon>Bacillales</taxon>
        <taxon>Staphylococcaceae</taxon>
        <taxon>Staphylococcus</taxon>
    </lineage>
</organism>